<keyword id="KW-0378">Hydrolase</keyword>
<keyword id="KW-1185">Reference proteome</keyword>
<proteinExistence type="evidence at transcript level"/>
<gene>
    <name evidence="6" type="primary">AMD1</name>
    <name type="ORF">FVEG_08289</name>
    <name type="ORF">FVEG_16285</name>
</gene>
<name>AMD1_GIBM7</name>
<comment type="function">
    <text evidence="2 3 4 5 8">Amidase; part of the Fusarium detoxification of benzoxazolinone cluster 1 (FDB1) involved in the degradation of benzoxazolinones produced by the host plant (PubMed:19302487, PubMed:26808652). Maize, wheat, and rye produce the 2 benzoxazinone phytoanticipins 2,4-dihy-droxy-7-methoxy-1,4-benzoxazin-3-one (DIMBOA) and 2,4-dihydroxy-1,4-benzoxazin-3-one (DIBOA) that, due to their inherent instability once released, spontaneously degrade to the more stable corresponding benzoxazolinones, 6-methoxy-2-benzoxazolinone (MBOA) and 2-benzoxazolinone (BOA), respectively (PubMed:11876429). The first step in the detoxification of benzoxazolinones involves the hydrolysis of the cyclic ester bond of benzoxazolinones by the FDB1 cluster gamma-lactamase MBL1 to aminophenols (PubMed:12788712, PubMed:26808652). MBL1 is able to convert BOA into 2-aminophenol (2-AP), as well as MBOA into 5-methoxy-2-aminophenol (2-AMP) (PubMed:12788712, PubMed:26808652). The FDB2 cluster N-malonyltransferase FDB2/NAT1 then metabolizes aminophenols via N-malonylation to non-toxic malonamic acids (PubMed:12788712, PubMed:19302487). FDB2/NAT1 converts 2-AP into N-(2-hydroxyphenyl) malonamic acid (HPMA) and 2-AMP into N-(2-hydroxy-4-methoxyphenyl) malonamic acid (HMPMA) (PubMed:12788712, PubMed:19302487). The duplicated dienlactone hydrolases DLH1 and DLH2 may provide redundant function for hydrolyzing the lactone moiety in the BOA molecule (Probable). The roles of the amidases an other enzymes encoded by the 2 FDB clusters have not been identified so far (Probable).</text>
</comment>
<comment type="catalytic activity">
    <reaction evidence="8">
        <text>a monocarboxylic acid amide + H2O = a monocarboxylate + NH4(+)</text>
        <dbReference type="Rhea" id="RHEA:12020"/>
        <dbReference type="ChEBI" id="CHEBI:15377"/>
        <dbReference type="ChEBI" id="CHEBI:28938"/>
        <dbReference type="ChEBI" id="CHEBI:35757"/>
        <dbReference type="ChEBI" id="CHEBI:83628"/>
        <dbReference type="EC" id="3.5.1.4"/>
    </reaction>
</comment>
<comment type="pathway">
    <text evidence="8">Xenobiotic degradation.</text>
</comment>
<comment type="induction">
    <text evidence="5">Expression is induced in response to 2-benzoxasolinone (BOA) exposure.</text>
</comment>
<comment type="disruption phenotype">
    <text evidence="5">Does not affect 2-benzoxazolinone (BOA) degradation.</text>
</comment>
<comment type="miscellaneous">
    <text evidence="8">Fusarium verticillioides possesses 2 unlinked loci, FDB1 and FDB2, necessary for detoxification of antimicrobial compounds produced by maize, including 2-benzoxazolinone (BOA) (Probable). The FDB2 cluster arose as a duplication of the FDB1 cluster with rearrangement and expansion by incorporating additional genes (Probable).</text>
</comment>
<comment type="similarity">
    <text evidence="7">Belongs to the amidase family.</text>
</comment>
<comment type="sequence caution" evidence="8">
    <conflict type="erroneous gene model prediction">
        <sequence resource="EMBL-CDS" id="EWG48577"/>
    </conflict>
    <text>The predicted gene FVEG_16285 has been split into 2 genes: FVEG_08288 and AMD1/FVEG_08289.</text>
</comment>
<reference key="1">
    <citation type="journal article" date="2010" name="Nature">
        <title>Comparative genomics reveals mobile pathogenicity chromosomes in Fusarium.</title>
        <authorList>
            <person name="Ma L.-J."/>
            <person name="van der Does H.C."/>
            <person name="Borkovich K.A."/>
            <person name="Coleman J.J."/>
            <person name="Daboussi M.-J."/>
            <person name="Di Pietro A."/>
            <person name="Dufresne M."/>
            <person name="Freitag M."/>
            <person name="Grabherr M."/>
            <person name="Henrissat B."/>
            <person name="Houterman P.M."/>
            <person name="Kang S."/>
            <person name="Shim W.-B."/>
            <person name="Woloshuk C."/>
            <person name="Xie X."/>
            <person name="Xu J.-R."/>
            <person name="Antoniw J."/>
            <person name="Baker S.E."/>
            <person name="Bluhm B.H."/>
            <person name="Breakspear A."/>
            <person name="Brown D.W."/>
            <person name="Butchko R.A.E."/>
            <person name="Chapman S."/>
            <person name="Coulson R."/>
            <person name="Coutinho P.M."/>
            <person name="Danchin E.G.J."/>
            <person name="Diener A."/>
            <person name="Gale L.R."/>
            <person name="Gardiner D.M."/>
            <person name="Goff S."/>
            <person name="Hammond-Kosack K.E."/>
            <person name="Hilburn K."/>
            <person name="Hua-Van A."/>
            <person name="Jonkers W."/>
            <person name="Kazan K."/>
            <person name="Kodira C.D."/>
            <person name="Koehrsen M."/>
            <person name="Kumar L."/>
            <person name="Lee Y.-H."/>
            <person name="Li L."/>
            <person name="Manners J.M."/>
            <person name="Miranda-Saavedra D."/>
            <person name="Mukherjee M."/>
            <person name="Park G."/>
            <person name="Park J."/>
            <person name="Park S.-Y."/>
            <person name="Proctor R.H."/>
            <person name="Regev A."/>
            <person name="Ruiz-Roldan M.C."/>
            <person name="Sain D."/>
            <person name="Sakthikumar S."/>
            <person name="Sykes S."/>
            <person name="Schwartz D.C."/>
            <person name="Turgeon B.G."/>
            <person name="Wapinski I."/>
            <person name="Yoder O."/>
            <person name="Young S."/>
            <person name="Zeng Q."/>
            <person name="Zhou S."/>
            <person name="Galagan J."/>
            <person name="Cuomo C.A."/>
            <person name="Kistler H.C."/>
            <person name="Rep M."/>
        </authorList>
    </citation>
    <scope>NUCLEOTIDE SEQUENCE [LARGE SCALE GENOMIC DNA]</scope>
    <source>
        <strain>M3125 / FGSC 7600</strain>
    </source>
</reference>
<reference key="2">
    <citation type="journal article" date="2002" name="Mol. Plant Microbe Interact.">
        <title>Fdb1 and Fdb2, Fusarium verticillioides loci necessary for detoxification of preformed antimicrobials from corn.</title>
        <authorList>
            <person name="Glenn A.E."/>
            <person name="Gold S.E."/>
            <person name="Bacon C.W."/>
        </authorList>
    </citation>
    <scope>FUNCTION</scope>
</reference>
<reference key="3">
    <citation type="journal article" date="2003" name="Appl. Environ. Microbiol.">
        <title>Identification of intermediate and branch metabolites resulting from biotransformation of 2-benzoxazolinone by Fusarium verticillioides.</title>
        <authorList>
            <person name="Glenn A.E."/>
            <person name="Meredith F.I."/>
            <person name="Morrison W.H. III"/>
            <person name="Bacon C.W."/>
        </authorList>
    </citation>
    <scope>FUNCTION</scope>
</reference>
<reference key="4">
    <citation type="journal article" date="2009" name="J. Appl. Microbiol.">
        <title>FDB2 encodes a member of the arylamine N-acetyltransferase family and is necessary for biotransformation of benzoxazolinones by Fusarium verticillioides.</title>
        <authorList>
            <person name="Glenn A.E."/>
            <person name="Bacon C.W."/>
        </authorList>
    </citation>
    <scope>FUNCTION</scope>
</reference>
<reference key="5">
    <citation type="journal article" date="2016" name="PLoS ONE">
        <title>Two horizontally transferred xenobiotic resistance gene clusters associated with detoxification of benzoxazolinones by Fusarium species.</title>
        <authorList>
            <person name="Glenn A.E."/>
            <person name="Davis C.B."/>
            <person name="Gao M."/>
            <person name="Gold S.E."/>
            <person name="Mitchell T.R."/>
            <person name="Proctor R.H."/>
            <person name="Stewart J.E."/>
            <person name="Snook M.E."/>
        </authorList>
    </citation>
    <scope>FUNCTION</scope>
    <scope>DISRUPTION PHENOTYPE</scope>
    <scope>INDUCTION</scope>
    <scope>PATHWAY</scope>
</reference>
<feature type="chain" id="PRO_0000454597" description="Amidase 1">
    <location>
        <begin position="1"/>
        <end position="521"/>
    </location>
</feature>
<feature type="active site" description="Charge relay system" evidence="1">
    <location>
        <position position="112"/>
    </location>
</feature>
<feature type="active site" description="Charge relay system" evidence="1">
    <location>
        <position position="187"/>
    </location>
</feature>
<feature type="active site" description="Acyl-ester intermediate" evidence="1">
    <location>
        <position position="211"/>
    </location>
</feature>
<feature type="binding site" evidence="1">
    <location>
        <position position="187"/>
    </location>
    <ligand>
        <name>substrate</name>
    </ligand>
</feature>
<feature type="binding site" evidence="1">
    <location>
        <begin position="208"/>
        <end position="211"/>
    </location>
    <ligand>
        <name>substrate</name>
    </ligand>
</feature>
<dbReference type="EC" id="3.5.1.4" evidence="8"/>
<dbReference type="EMBL" id="CM000587">
    <property type="protein sequence ID" value="EWG48577.1"/>
    <property type="status" value="ALT_SEQ"/>
    <property type="molecule type" value="Genomic_DNA"/>
</dbReference>
<dbReference type="SMR" id="P9WEP6"/>
<dbReference type="OMA" id="DWGMLSS"/>
<dbReference type="Proteomes" id="UP000009096">
    <property type="component" value="Chromosome 10"/>
</dbReference>
<dbReference type="GO" id="GO:0016787">
    <property type="term" value="F:hydrolase activity"/>
    <property type="evidence" value="ECO:0007669"/>
    <property type="project" value="UniProtKB-KW"/>
</dbReference>
<dbReference type="Gene3D" id="3.90.1300.10">
    <property type="entry name" value="Amidase signature (AS) domain"/>
    <property type="match status" value="1"/>
</dbReference>
<dbReference type="InterPro" id="IPR020556">
    <property type="entry name" value="Amidase_CS"/>
</dbReference>
<dbReference type="InterPro" id="IPR023631">
    <property type="entry name" value="Amidase_dom"/>
</dbReference>
<dbReference type="InterPro" id="IPR036928">
    <property type="entry name" value="AS_sf"/>
</dbReference>
<dbReference type="PANTHER" id="PTHR46072:SF2">
    <property type="entry name" value="AMIDASE (EUROFUNG)"/>
    <property type="match status" value="1"/>
</dbReference>
<dbReference type="PANTHER" id="PTHR46072">
    <property type="entry name" value="AMIDASE-RELATED-RELATED"/>
    <property type="match status" value="1"/>
</dbReference>
<dbReference type="Pfam" id="PF01425">
    <property type="entry name" value="Amidase"/>
    <property type="match status" value="1"/>
</dbReference>
<dbReference type="PIRSF" id="PIRSF001221">
    <property type="entry name" value="Amidase_fungi"/>
    <property type="match status" value="1"/>
</dbReference>
<dbReference type="SUPFAM" id="SSF75304">
    <property type="entry name" value="Amidase signature (AS) enzymes"/>
    <property type="match status" value="1"/>
</dbReference>
<dbReference type="PROSITE" id="PS00571">
    <property type="entry name" value="AMIDASES"/>
    <property type="match status" value="1"/>
</dbReference>
<accession>P9WEP6</accession>
<accession>W7MVT4</accession>
<evidence type="ECO:0000250" key="1">
    <source>
        <dbReference type="UniProtKB" id="P97612"/>
    </source>
</evidence>
<evidence type="ECO:0000269" key="2">
    <source>
    </source>
</evidence>
<evidence type="ECO:0000269" key="3">
    <source>
    </source>
</evidence>
<evidence type="ECO:0000269" key="4">
    <source>
    </source>
</evidence>
<evidence type="ECO:0000269" key="5">
    <source>
    </source>
</evidence>
<evidence type="ECO:0000303" key="6">
    <source>
    </source>
</evidence>
<evidence type="ECO:0000305" key="7"/>
<evidence type="ECO:0000305" key="8">
    <source>
    </source>
</evidence>
<sequence length="521" mass="57586">MPRSWTDIVAEKRAIRDEKLTKCYGENVPSDPRIIAAKDIQALTKLLEARNVTAEAVVLAHIAKAKEAHQRTNCLTEICFDEALEHARELDAFQQEHGRLKGPLHGVPVSLKDQFNLKGLDSTLGYVGRAFHPAASDCVLVKVLKQLGAVILAKTNLPQCILWGETDNPLWGLTTHPMNPEYTPGGSSGGEGTLLALNGSMLGWGTDIGGSIRVPSHMNGLWGFKPSSGRFSYEAVAVSQDGQQQIPSVVGPMARTLSTITLASKAMIEAECWRLDPQLPPMPWRKDVFQEYLQKPLVIGIMVDDGTVKVHPPIERVFKEFCKKLEAAGHELVPWDTSLNADCIKIMDEHYIADGGEDIRRDMAAGGEPYMPHVQNLVDRGSAISVYEYWQLNKRKKATQAAYNTMWNATKSSSGKPVDVLLVPTMPHTAIPHRTLRYPGYTKLFNMLDYSALSFPAGTALKALDSVCTGEYEPRNAADAWNWSLYDIEKMDGYSVGLQIVGRRMEEEKVLGAAHQVQQLL</sequence>
<protein>
    <recommendedName>
        <fullName evidence="6">Amidase 1</fullName>
        <ecNumber evidence="8">3.5.1.4</ecNumber>
    </recommendedName>
    <alternativeName>
        <fullName evidence="6">Fusarium detoxification of benzoxazolinone cluster 1 protein AMD1</fullName>
        <shortName evidence="6">FDB1 cluster protein AMD1</shortName>
    </alternativeName>
</protein>
<organism>
    <name type="scientific">Gibberella moniliformis (strain M3125 / FGSC 7600)</name>
    <name type="common">Maize ear and stalk rot fungus</name>
    <name type="synonym">Fusarium verticillioides</name>
    <dbReference type="NCBI Taxonomy" id="334819"/>
    <lineage>
        <taxon>Eukaryota</taxon>
        <taxon>Fungi</taxon>
        <taxon>Dikarya</taxon>
        <taxon>Ascomycota</taxon>
        <taxon>Pezizomycotina</taxon>
        <taxon>Sordariomycetes</taxon>
        <taxon>Hypocreomycetidae</taxon>
        <taxon>Hypocreales</taxon>
        <taxon>Nectriaceae</taxon>
        <taxon>Fusarium</taxon>
        <taxon>Fusarium fujikuroi species complex</taxon>
    </lineage>
</organism>